<organism>
    <name type="scientific">Mycoplasmoides gallisepticum (strain R(low / passage 15 / clone 2))</name>
    <name type="common">Mycoplasma gallisepticum</name>
    <dbReference type="NCBI Taxonomy" id="710127"/>
    <lineage>
        <taxon>Bacteria</taxon>
        <taxon>Bacillati</taxon>
        <taxon>Mycoplasmatota</taxon>
        <taxon>Mycoplasmoidales</taxon>
        <taxon>Mycoplasmoidaceae</taxon>
        <taxon>Mycoplasmoides</taxon>
    </lineage>
</organism>
<sequence length="130" mass="14803">MVKLKVLSPNGTLFDEKIEMVIVKGAEGYAGFMRNTQPSIFAINNSVGYITYPDKTKKSVVIENATLYCNKDLIKIFALDFVIADNLSYDEIMKRKKDLESKIKDTTDTKELIRLQHALDIELLKLKEAK</sequence>
<reference key="1">
    <citation type="journal article" date="1992" name="Biochem. J.">
        <title>Nucleotide sequence, organization and characterization of the atp genes and the encoded subunits of Mycoplasma gallisepticum ATPase.</title>
        <authorList>
            <person name="Rasmussen O.F."/>
            <person name="Shirvan M.H."/>
            <person name="Margalit H."/>
            <person name="Christiansen C."/>
            <person name="Rottem S."/>
        </authorList>
    </citation>
    <scope>NUCLEOTIDE SEQUENCE [GENOMIC DNA]</scope>
    <source>
        <strain>A5969Var.B</strain>
    </source>
</reference>
<reference key="2">
    <citation type="journal article" date="2003" name="Microbiology">
        <title>The complete genome sequence of the avian pathogen Mycoplasma gallisepticum strain R(low).</title>
        <authorList>
            <person name="Papazisi L."/>
            <person name="Gorton T.S."/>
            <person name="Kutish G."/>
            <person name="Markham P.F."/>
            <person name="Browning G.F."/>
            <person name="Nguyen D.K."/>
            <person name="Swartzell S."/>
            <person name="Madan A."/>
            <person name="Mahairas G."/>
            <person name="Geary S.J."/>
        </authorList>
    </citation>
    <scope>NUCLEOTIDE SEQUENCE [LARGE SCALE GENOMIC DNA]</scope>
    <source>
        <strain>R(low / passage 15 / clone 2)</strain>
    </source>
</reference>
<protein>
    <recommendedName>
        <fullName>ATP synthase epsilon chain</fullName>
    </recommendedName>
    <alternativeName>
        <fullName>ATP synthase F1 sector epsilon subunit</fullName>
    </alternativeName>
    <alternativeName>
        <fullName>F-ATPase epsilon subunit</fullName>
    </alternativeName>
</protein>
<gene>
    <name type="primary">atpC</name>
    <name type="ordered locus">MYCGA3070</name>
    <name type="ORF">MGA_1179</name>
</gene>
<dbReference type="EMBL" id="X64256">
    <property type="protein sequence ID" value="CAA45552.1"/>
    <property type="molecule type" value="Genomic_DNA"/>
</dbReference>
<dbReference type="EMBL" id="AE015450">
    <property type="protein sequence ID" value="AAP56657.1"/>
    <property type="molecule type" value="Genomic_DNA"/>
</dbReference>
<dbReference type="PIR" id="S24340">
    <property type="entry name" value="S24340"/>
</dbReference>
<dbReference type="RefSeq" id="WP_011113548.1">
    <property type="nucleotide sequence ID" value="NC_004829.2"/>
</dbReference>
<dbReference type="SMR" id="P33255"/>
<dbReference type="KEGG" id="mga:MGA_1179"/>
<dbReference type="HOGENOM" id="CLU_1935701_0_0_14"/>
<dbReference type="OrthoDB" id="389606at2"/>
<dbReference type="Proteomes" id="UP000001418">
    <property type="component" value="Chromosome"/>
</dbReference>
<dbReference type="GO" id="GO:0005886">
    <property type="term" value="C:plasma membrane"/>
    <property type="evidence" value="ECO:0007669"/>
    <property type="project" value="UniProtKB-SubCell"/>
</dbReference>
<dbReference type="GO" id="GO:0045259">
    <property type="term" value="C:proton-transporting ATP synthase complex"/>
    <property type="evidence" value="ECO:0007669"/>
    <property type="project" value="UniProtKB-KW"/>
</dbReference>
<dbReference type="GO" id="GO:0005524">
    <property type="term" value="F:ATP binding"/>
    <property type="evidence" value="ECO:0007669"/>
    <property type="project" value="UniProtKB-UniRule"/>
</dbReference>
<dbReference type="GO" id="GO:0046933">
    <property type="term" value="F:proton-transporting ATP synthase activity, rotational mechanism"/>
    <property type="evidence" value="ECO:0007669"/>
    <property type="project" value="UniProtKB-UniRule"/>
</dbReference>
<dbReference type="Gene3D" id="2.60.15.10">
    <property type="entry name" value="F0F1 ATP synthase delta/epsilon subunit, N-terminal"/>
    <property type="match status" value="1"/>
</dbReference>
<dbReference type="HAMAP" id="MF_00530">
    <property type="entry name" value="ATP_synth_epsil_bac"/>
    <property type="match status" value="1"/>
</dbReference>
<dbReference type="InterPro" id="IPR001469">
    <property type="entry name" value="ATP_synth_F1_dsu/esu"/>
</dbReference>
<dbReference type="InterPro" id="IPR020546">
    <property type="entry name" value="ATP_synth_F1_dsu/esu_N"/>
</dbReference>
<dbReference type="InterPro" id="IPR036771">
    <property type="entry name" value="ATPsynth_dsu/esu_N"/>
</dbReference>
<dbReference type="NCBIfam" id="NF001812">
    <property type="entry name" value="PRK00539.1"/>
    <property type="match status" value="1"/>
</dbReference>
<dbReference type="Pfam" id="PF02823">
    <property type="entry name" value="ATP-synt_DE_N"/>
    <property type="match status" value="1"/>
</dbReference>
<dbReference type="SUPFAM" id="SSF51344">
    <property type="entry name" value="Epsilon subunit of F1F0-ATP synthase N-terminal domain"/>
    <property type="match status" value="1"/>
</dbReference>
<comment type="function">
    <text>Produces ATP from ADP in the presence of a proton gradient across the membrane.</text>
</comment>
<comment type="subunit">
    <text>F-type ATPases have 2 components, CF(1) - the catalytic core - and CF(0) - the membrane proton channel. CF(1) has five subunits: alpha(3), beta(3), gamma(1), delta(1), epsilon(1). CF(0) has three main subunits: a, b and c.</text>
</comment>
<comment type="subcellular location">
    <subcellularLocation>
        <location evidence="1">Cell membrane</location>
        <topology evidence="1">Peripheral membrane protein</topology>
    </subcellularLocation>
</comment>
<comment type="similarity">
    <text evidence="2">Belongs to the ATPase epsilon chain family.</text>
</comment>
<accession>P33255</accession>
<proteinExistence type="inferred from homology"/>
<keyword id="KW-0066">ATP synthesis</keyword>
<keyword id="KW-1003">Cell membrane</keyword>
<keyword id="KW-0139">CF(1)</keyword>
<keyword id="KW-0375">Hydrogen ion transport</keyword>
<keyword id="KW-0406">Ion transport</keyword>
<keyword id="KW-0472">Membrane</keyword>
<keyword id="KW-1185">Reference proteome</keyword>
<keyword id="KW-0813">Transport</keyword>
<feature type="chain" id="PRO_0000188159" description="ATP synthase epsilon chain">
    <location>
        <begin position="1"/>
        <end position="130"/>
    </location>
</feature>
<feature type="sequence conflict" description="In Ref. 1; CAA45552." evidence="2" ref="1">
    <original>K</original>
    <variation>E</variation>
    <location>
        <position position="17"/>
    </location>
</feature>
<feature type="sequence conflict" description="In Ref. 1; CAA45552." evidence="2" ref="1">
    <original>V</original>
    <variation>I</variation>
    <location>
        <position position="21"/>
    </location>
</feature>
<feature type="sequence conflict" description="In Ref. 1; CAA45552." evidence="2" ref="1">
    <original>KD</original>
    <variation>QV</variation>
    <location>
        <begin position="97"/>
        <end position="98"/>
    </location>
</feature>
<feature type="sequence conflict" description="In Ref. 1; CAA45552." evidence="2" ref="1">
    <original>D</original>
    <variation>E</variation>
    <location>
        <position position="120"/>
    </location>
</feature>
<evidence type="ECO:0000250" key="1"/>
<evidence type="ECO:0000305" key="2"/>
<name>ATPE_MYCGA</name>